<protein>
    <recommendedName>
        <fullName>Mitoguardin 1</fullName>
    </recommendedName>
    <alternativeName>
        <fullName evidence="6">Protein FAM73A</fullName>
    </alternativeName>
</protein>
<organism>
    <name type="scientific">Mus musculus</name>
    <name type="common">Mouse</name>
    <dbReference type="NCBI Taxonomy" id="10090"/>
    <lineage>
        <taxon>Eukaryota</taxon>
        <taxon>Metazoa</taxon>
        <taxon>Chordata</taxon>
        <taxon>Craniata</taxon>
        <taxon>Vertebrata</taxon>
        <taxon>Euteleostomi</taxon>
        <taxon>Mammalia</taxon>
        <taxon>Eutheria</taxon>
        <taxon>Euarchontoglires</taxon>
        <taxon>Glires</taxon>
        <taxon>Rodentia</taxon>
        <taxon>Myomorpha</taxon>
        <taxon>Muroidea</taxon>
        <taxon>Muridae</taxon>
        <taxon>Murinae</taxon>
        <taxon>Mus</taxon>
        <taxon>Mus</taxon>
    </lineage>
</organism>
<evidence type="ECO:0000250" key="1">
    <source>
        <dbReference type="UniProtKB" id="Q8NAN2"/>
    </source>
</evidence>
<evidence type="ECO:0000255" key="2"/>
<evidence type="ECO:0000269" key="3">
    <source>
    </source>
</evidence>
<evidence type="ECO:0000269" key="4">
    <source>
    </source>
</evidence>
<evidence type="ECO:0000303" key="5">
    <source>
    </source>
</evidence>
<evidence type="ECO:0000305" key="6"/>
<evidence type="ECO:0000312" key="7">
    <source>
        <dbReference type="MGI" id="MGI:1924567"/>
    </source>
</evidence>
<evidence type="ECO:0007744" key="8">
    <source>
    </source>
</evidence>
<reference key="1">
    <citation type="journal article" date="2005" name="Science">
        <title>The transcriptional landscape of the mammalian genome.</title>
        <authorList>
            <person name="Carninci P."/>
            <person name="Kasukawa T."/>
            <person name="Katayama S."/>
            <person name="Gough J."/>
            <person name="Frith M.C."/>
            <person name="Maeda N."/>
            <person name="Oyama R."/>
            <person name="Ravasi T."/>
            <person name="Lenhard B."/>
            <person name="Wells C."/>
            <person name="Kodzius R."/>
            <person name="Shimokawa K."/>
            <person name="Bajic V.B."/>
            <person name="Brenner S.E."/>
            <person name="Batalov S."/>
            <person name="Forrest A.R."/>
            <person name="Zavolan M."/>
            <person name="Davis M.J."/>
            <person name="Wilming L.G."/>
            <person name="Aidinis V."/>
            <person name="Allen J.E."/>
            <person name="Ambesi-Impiombato A."/>
            <person name="Apweiler R."/>
            <person name="Aturaliya R.N."/>
            <person name="Bailey T.L."/>
            <person name="Bansal M."/>
            <person name="Baxter L."/>
            <person name="Beisel K.W."/>
            <person name="Bersano T."/>
            <person name="Bono H."/>
            <person name="Chalk A.M."/>
            <person name="Chiu K.P."/>
            <person name="Choudhary V."/>
            <person name="Christoffels A."/>
            <person name="Clutterbuck D.R."/>
            <person name="Crowe M.L."/>
            <person name="Dalla E."/>
            <person name="Dalrymple B.P."/>
            <person name="de Bono B."/>
            <person name="Della Gatta G."/>
            <person name="di Bernardo D."/>
            <person name="Down T."/>
            <person name="Engstrom P."/>
            <person name="Fagiolini M."/>
            <person name="Faulkner G."/>
            <person name="Fletcher C.F."/>
            <person name="Fukushima T."/>
            <person name="Furuno M."/>
            <person name="Futaki S."/>
            <person name="Gariboldi M."/>
            <person name="Georgii-Hemming P."/>
            <person name="Gingeras T.R."/>
            <person name="Gojobori T."/>
            <person name="Green R.E."/>
            <person name="Gustincich S."/>
            <person name="Harbers M."/>
            <person name="Hayashi Y."/>
            <person name="Hensch T.K."/>
            <person name="Hirokawa N."/>
            <person name="Hill D."/>
            <person name="Huminiecki L."/>
            <person name="Iacono M."/>
            <person name="Ikeo K."/>
            <person name="Iwama A."/>
            <person name="Ishikawa T."/>
            <person name="Jakt M."/>
            <person name="Kanapin A."/>
            <person name="Katoh M."/>
            <person name="Kawasawa Y."/>
            <person name="Kelso J."/>
            <person name="Kitamura H."/>
            <person name="Kitano H."/>
            <person name="Kollias G."/>
            <person name="Krishnan S.P."/>
            <person name="Kruger A."/>
            <person name="Kummerfeld S.K."/>
            <person name="Kurochkin I.V."/>
            <person name="Lareau L.F."/>
            <person name="Lazarevic D."/>
            <person name="Lipovich L."/>
            <person name="Liu J."/>
            <person name="Liuni S."/>
            <person name="McWilliam S."/>
            <person name="Madan Babu M."/>
            <person name="Madera M."/>
            <person name="Marchionni L."/>
            <person name="Matsuda H."/>
            <person name="Matsuzawa S."/>
            <person name="Miki H."/>
            <person name="Mignone F."/>
            <person name="Miyake S."/>
            <person name="Morris K."/>
            <person name="Mottagui-Tabar S."/>
            <person name="Mulder N."/>
            <person name="Nakano N."/>
            <person name="Nakauchi H."/>
            <person name="Ng P."/>
            <person name="Nilsson R."/>
            <person name="Nishiguchi S."/>
            <person name="Nishikawa S."/>
            <person name="Nori F."/>
            <person name="Ohara O."/>
            <person name="Okazaki Y."/>
            <person name="Orlando V."/>
            <person name="Pang K.C."/>
            <person name="Pavan W.J."/>
            <person name="Pavesi G."/>
            <person name="Pesole G."/>
            <person name="Petrovsky N."/>
            <person name="Piazza S."/>
            <person name="Reed J."/>
            <person name="Reid J.F."/>
            <person name="Ring B.Z."/>
            <person name="Ringwald M."/>
            <person name="Rost B."/>
            <person name="Ruan Y."/>
            <person name="Salzberg S.L."/>
            <person name="Sandelin A."/>
            <person name="Schneider C."/>
            <person name="Schoenbach C."/>
            <person name="Sekiguchi K."/>
            <person name="Semple C.A."/>
            <person name="Seno S."/>
            <person name="Sessa L."/>
            <person name="Sheng Y."/>
            <person name="Shibata Y."/>
            <person name="Shimada H."/>
            <person name="Shimada K."/>
            <person name="Silva D."/>
            <person name="Sinclair B."/>
            <person name="Sperling S."/>
            <person name="Stupka E."/>
            <person name="Sugiura K."/>
            <person name="Sultana R."/>
            <person name="Takenaka Y."/>
            <person name="Taki K."/>
            <person name="Tammoja K."/>
            <person name="Tan S.L."/>
            <person name="Tang S."/>
            <person name="Taylor M.S."/>
            <person name="Tegner J."/>
            <person name="Teichmann S.A."/>
            <person name="Ueda H.R."/>
            <person name="van Nimwegen E."/>
            <person name="Verardo R."/>
            <person name="Wei C.L."/>
            <person name="Yagi K."/>
            <person name="Yamanishi H."/>
            <person name="Zabarovsky E."/>
            <person name="Zhu S."/>
            <person name="Zimmer A."/>
            <person name="Hide W."/>
            <person name="Bult C."/>
            <person name="Grimmond S.M."/>
            <person name="Teasdale R.D."/>
            <person name="Liu E.T."/>
            <person name="Brusic V."/>
            <person name="Quackenbush J."/>
            <person name="Wahlestedt C."/>
            <person name="Mattick J.S."/>
            <person name="Hume D.A."/>
            <person name="Kai C."/>
            <person name="Sasaki D."/>
            <person name="Tomaru Y."/>
            <person name="Fukuda S."/>
            <person name="Kanamori-Katayama M."/>
            <person name="Suzuki M."/>
            <person name="Aoki J."/>
            <person name="Arakawa T."/>
            <person name="Iida J."/>
            <person name="Imamura K."/>
            <person name="Itoh M."/>
            <person name="Kato T."/>
            <person name="Kawaji H."/>
            <person name="Kawagashira N."/>
            <person name="Kawashima T."/>
            <person name="Kojima M."/>
            <person name="Kondo S."/>
            <person name="Konno H."/>
            <person name="Nakano K."/>
            <person name="Ninomiya N."/>
            <person name="Nishio T."/>
            <person name="Okada M."/>
            <person name="Plessy C."/>
            <person name="Shibata K."/>
            <person name="Shiraki T."/>
            <person name="Suzuki S."/>
            <person name="Tagami M."/>
            <person name="Waki K."/>
            <person name="Watahiki A."/>
            <person name="Okamura-Oho Y."/>
            <person name="Suzuki H."/>
            <person name="Kawai J."/>
            <person name="Hayashizaki Y."/>
        </authorList>
    </citation>
    <scope>NUCLEOTIDE SEQUENCE [LARGE SCALE MRNA] (ISOFORMS 1; 2 AND 3)</scope>
    <source>
        <strain>C57BL/6J</strain>
        <tissue>Corpora quadrigemina</tissue>
        <tissue>Lung</tissue>
        <tissue>Retina</tissue>
    </source>
</reference>
<reference key="2">
    <citation type="journal article" date="2004" name="Genome Res.">
        <title>The status, quality, and expansion of the NIH full-length cDNA project: the Mammalian Gene Collection (MGC).</title>
        <authorList>
            <consortium name="The MGC Project Team"/>
        </authorList>
    </citation>
    <scope>NUCLEOTIDE SEQUENCE [LARGE SCALE MRNA] (ISOFORM 1)</scope>
    <source>
        <strain>C57BL/6J</strain>
        <tissue>Brain</tissue>
    </source>
</reference>
<reference key="3">
    <citation type="journal article" date="2010" name="Cell">
        <title>A tissue-specific atlas of mouse protein phosphorylation and expression.</title>
        <authorList>
            <person name="Huttlin E.L."/>
            <person name="Jedrychowski M.P."/>
            <person name="Elias J.E."/>
            <person name="Goswami T."/>
            <person name="Rad R."/>
            <person name="Beausoleil S.A."/>
            <person name="Villen J."/>
            <person name="Haas W."/>
            <person name="Sowa M.E."/>
            <person name="Gygi S.P."/>
        </authorList>
    </citation>
    <scope>PHOSPHORYLATION [LARGE SCALE ANALYSIS] AT SER-257 AND SER-261</scope>
    <scope>IDENTIFICATION BY MASS SPECTROMETRY [LARGE SCALE ANALYSIS]</scope>
    <source>
        <tissue>Brain</tissue>
    </source>
</reference>
<reference key="4">
    <citation type="journal article" date="2016" name="Mol. Cell">
        <title>Mitoguardin regulates mitochondrial fusion through MitoPLD and is required for neuronal homeostasis.</title>
        <authorList>
            <person name="Zhang Y."/>
            <person name="Liu X."/>
            <person name="Bai J."/>
            <person name="Tian X."/>
            <person name="Zhao X."/>
            <person name="Liu W."/>
            <person name="Duan X."/>
            <person name="Shang W."/>
            <person name="Fan H.Y."/>
            <person name="Tong C."/>
        </authorList>
    </citation>
    <scope>FUNCTION</scope>
    <scope>DISRUPTION PHENOTYPE</scope>
</reference>
<reference key="5">
    <citation type="journal article" date="2016" name="Oncotarget">
        <title>Mitoguardin-1 and -2 promote maturation and the developmental potential of mouse oocytes by maintaining mitochondrial dynamics and functions.</title>
        <authorList>
            <person name="Liu X.M."/>
            <person name="Zhang Y.P."/>
            <person name="Ji S.Y."/>
            <person name="Li B.T."/>
            <person name="Tian X."/>
            <person name="Li D."/>
            <person name="Tong C."/>
            <person name="Fan H.Y."/>
        </authorList>
    </citation>
    <scope>DISRUPTION PHENOTYPE</scope>
</reference>
<gene>
    <name evidence="1" type="primary">Miga1</name>
    <name evidence="7" type="synonym">Fam73a</name>
</gene>
<sequence>MSDETVSRSQFSLKTYAVRVFALPVSWYYSLSQIKFSPVAKKLFMVTAVSAVSVIFLAHHFKRRRGKQKGKVLPWEPEHLLLEHTRRAASEKGSSCSSSRQNLTLSLSSTKEKGSQCCNYPNGGLLSRYSGSAQSLGSVQSVNSCHSCACGNSNSWDKADDDDIRLVNIPVTTPENLYLMGMELFEEALRRWEQALTFRSRQAEDEACSSVKLGAGDAIAEESVDDIISSEFIHKLEALLQRAYRLQEEFEATLGGSDPNSIANDTDKDTDMSLRETMDELGLPDAMNMDSADLFASATELAEQREAQQTFSLESFCPCPFYEEAMHLVEEGKIYSRVLRTEMLECLGDSDFLAKLHCIRQAFQLILAEADNRSFLAESGRKILSALIVKARKNPKKFQDVFDEMINFLEQTDHWDSTELELAARGVKNLNFYDVVLDFILMDSFEDLENPPTSIQSVVNNRWLNSSFKESAVASSCWSVLKQKRQQMKISDGFFAHFYAICEHVSPVLAWGFLGPRNSLYDLCCFFKNQVLFFLKDIFDFEKVRYSSIDTLAEDLTHLLIRRTELLVTCLGADALRHATTCTSGHSHAVPTALLEAKVQ</sequence>
<name>MIGA1_MOUSE</name>
<proteinExistence type="evidence at protein level"/>
<feature type="chain" id="PRO_0000285647" description="Mitoguardin 1">
    <location>
        <begin position="1"/>
        <end position="600"/>
    </location>
</feature>
<feature type="transmembrane region" description="Helical" evidence="2">
    <location>
        <begin position="15"/>
        <end position="32"/>
    </location>
</feature>
<feature type="transmembrane region" description="Helical" evidence="2">
    <location>
        <begin position="38"/>
        <end position="58"/>
    </location>
</feature>
<feature type="modified residue" description="Phosphoserine" evidence="8">
    <location>
        <position position="257"/>
    </location>
</feature>
<feature type="modified residue" description="Phosphoserine" evidence="8">
    <location>
        <position position="261"/>
    </location>
</feature>
<feature type="splice variant" id="VSP_024880" description="In isoform 3." evidence="5">
    <location>
        <begin position="302"/>
        <end position="365"/>
    </location>
</feature>
<feature type="splice variant" id="VSP_024881" description="In isoform 2." evidence="5">
    <original>ISDGFFAHFYAICEHVS</original>
    <variation>VKLTMPQTPPQFILCGF</variation>
    <location>
        <begin position="490"/>
        <end position="506"/>
    </location>
</feature>
<feature type="splice variant" id="VSP_024882" description="In isoform 2." evidence="5">
    <location>
        <begin position="507"/>
        <end position="600"/>
    </location>
</feature>
<feature type="sequence conflict" description="In Ref. 1; BAC39340." evidence="6" ref="1">
    <original>F</original>
    <variation>L</variation>
    <location>
        <position position="321"/>
    </location>
</feature>
<dbReference type="EMBL" id="AK044739">
    <property type="protein sequence ID" value="BAC32059.1"/>
    <property type="status" value="ALT_FRAME"/>
    <property type="molecule type" value="mRNA"/>
</dbReference>
<dbReference type="EMBL" id="AK045347">
    <property type="protein sequence ID" value="BAC32322.1"/>
    <property type="molecule type" value="mRNA"/>
</dbReference>
<dbReference type="EMBL" id="AK085017">
    <property type="protein sequence ID" value="BAC39340.1"/>
    <property type="molecule type" value="mRNA"/>
</dbReference>
<dbReference type="EMBL" id="BC098205">
    <property type="protein sequence ID" value="AAH98205.1"/>
    <property type="molecule type" value="mRNA"/>
</dbReference>
<dbReference type="CCDS" id="CCDS17916.1">
    <molecule id="Q4QQM5-1"/>
</dbReference>
<dbReference type="CCDS" id="CCDS51096.1">
    <molecule id="Q4QQM5-3"/>
</dbReference>
<dbReference type="RefSeq" id="NP_001155847.1">
    <molecule id="Q4QQM5-3"/>
    <property type="nucleotide sequence ID" value="NM_001162375.1"/>
</dbReference>
<dbReference type="RefSeq" id="NP_777357.2">
    <molecule id="Q4QQM5-1"/>
    <property type="nucleotide sequence ID" value="NM_174868.4"/>
</dbReference>
<dbReference type="SMR" id="Q4QQM5"/>
<dbReference type="FunCoup" id="Q4QQM5">
    <property type="interactions" value="3190"/>
</dbReference>
<dbReference type="STRING" id="10090.ENSMUSP00000072836"/>
<dbReference type="iPTMnet" id="Q4QQM5"/>
<dbReference type="PhosphoSitePlus" id="Q4QQM5"/>
<dbReference type="PaxDb" id="10090-ENSMUSP00000072836"/>
<dbReference type="PeptideAtlas" id="Q4QQM5"/>
<dbReference type="ProteomicsDB" id="290242">
    <molecule id="Q4QQM5-1"/>
</dbReference>
<dbReference type="ProteomicsDB" id="290243">
    <molecule id="Q4QQM5-2"/>
</dbReference>
<dbReference type="ProteomicsDB" id="290244">
    <molecule id="Q4QQM5-3"/>
</dbReference>
<dbReference type="Antibodypedia" id="2672">
    <property type="antibodies" value="27 antibodies from 14 providers"/>
</dbReference>
<dbReference type="DNASU" id="215708"/>
<dbReference type="Ensembl" id="ENSMUST00000068243.11">
    <molecule id="Q4QQM5-3"/>
    <property type="protein sequence ID" value="ENSMUSP00000068261.7"/>
    <property type="gene ID" value="ENSMUSG00000054942.14"/>
</dbReference>
<dbReference type="Ensembl" id="ENSMUST00000073089.13">
    <molecule id="Q4QQM5-1"/>
    <property type="protein sequence ID" value="ENSMUSP00000072836.7"/>
    <property type="gene ID" value="ENSMUSG00000054942.14"/>
</dbReference>
<dbReference type="Ensembl" id="ENSMUST00000199334.5">
    <molecule id="Q4QQM5-2"/>
    <property type="protein sequence ID" value="ENSMUSP00000143238.2"/>
    <property type="gene ID" value="ENSMUSG00000054942.14"/>
</dbReference>
<dbReference type="GeneID" id="215708"/>
<dbReference type="KEGG" id="mmu:215708"/>
<dbReference type="UCSC" id="uc008rte.2">
    <molecule id="Q4QQM5-1"/>
    <property type="organism name" value="mouse"/>
</dbReference>
<dbReference type="UCSC" id="uc008rtf.2">
    <molecule id="Q4QQM5-2"/>
    <property type="organism name" value="mouse"/>
</dbReference>
<dbReference type="UCSC" id="uc012czl.1">
    <molecule id="Q4QQM5-3"/>
    <property type="organism name" value="mouse"/>
</dbReference>
<dbReference type="AGR" id="MGI:1924567"/>
<dbReference type="CTD" id="374986"/>
<dbReference type="MGI" id="MGI:1924567">
    <property type="gene designation" value="Miga1"/>
</dbReference>
<dbReference type="VEuPathDB" id="HostDB:ENSMUSG00000054942"/>
<dbReference type="eggNOG" id="KOG3831">
    <property type="taxonomic scope" value="Eukaryota"/>
</dbReference>
<dbReference type="GeneTree" id="ENSGT00390000008565"/>
<dbReference type="HOGENOM" id="CLU_031519_1_0_1"/>
<dbReference type="InParanoid" id="Q4QQM5"/>
<dbReference type="OMA" id="WENTEAE"/>
<dbReference type="OrthoDB" id="8880065at2759"/>
<dbReference type="PhylomeDB" id="Q4QQM5"/>
<dbReference type="TreeFam" id="TF313896"/>
<dbReference type="Reactome" id="R-MMU-1483166">
    <property type="pathway name" value="Synthesis of PA"/>
</dbReference>
<dbReference type="BioGRID-ORCS" id="215708">
    <property type="hits" value="1 hit in 78 CRISPR screens"/>
</dbReference>
<dbReference type="PRO" id="PR:Q4QQM5"/>
<dbReference type="Proteomes" id="UP000000589">
    <property type="component" value="Chromosome 3"/>
</dbReference>
<dbReference type="RNAct" id="Q4QQM5">
    <property type="molecule type" value="protein"/>
</dbReference>
<dbReference type="Bgee" id="ENSMUSG00000054942">
    <property type="expression patterns" value="Expressed in dorsomedial nucleus of hypothalamus and 222 other cell types or tissues"/>
</dbReference>
<dbReference type="ExpressionAtlas" id="Q4QQM5">
    <property type="expression patterns" value="baseline and differential"/>
</dbReference>
<dbReference type="GO" id="GO:0005741">
    <property type="term" value="C:mitochondrial outer membrane"/>
    <property type="evidence" value="ECO:0007669"/>
    <property type="project" value="UniProtKB-SubCell"/>
</dbReference>
<dbReference type="GO" id="GO:0005886">
    <property type="term" value="C:plasma membrane"/>
    <property type="evidence" value="ECO:0000250"/>
    <property type="project" value="UniProtKB"/>
</dbReference>
<dbReference type="GO" id="GO:0046982">
    <property type="term" value="F:protein heterodimerization activity"/>
    <property type="evidence" value="ECO:0000250"/>
    <property type="project" value="UniProtKB"/>
</dbReference>
<dbReference type="GO" id="GO:0042803">
    <property type="term" value="F:protein homodimerization activity"/>
    <property type="evidence" value="ECO:0000250"/>
    <property type="project" value="UniProtKB"/>
</dbReference>
<dbReference type="GO" id="GO:0008053">
    <property type="term" value="P:mitochondrial fusion"/>
    <property type="evidence" value="ECO:0000315"/>
    <property type="project" value="UniProtKB"/>
</dbReference>
<dbReference type="InterPro" id="IPR019392">
    <property type="entry name" value="Miga"/>
</dbReference>
<dbReference type="PANTHER" id="PTHR21508">
    <property type="entry name" value="MITOGUARDIN"/>
    <property type="match status" value="1"/>
</dbReference>
<dbReference type="PANTHER" id="PTHR21508:SF3">
    <property type="entry name" value="MITOGUARDIN 1"/>
    <property type="match status" value="1"/>
</dbReference>
<dbReference type="Pfam" id="PF10265">
    <property type="entry name" value="Miga"/>
    <property type="match status" value="1"/>
</dbReference>
<keyword id="KW-0025">Alternative splicing</keyword>
<keyword id="KW-0472">Membrane</keyword>
<keyword id="KW-0496">Mitochondrion</keyword>
<keyword id="KW-1000">Mitochondrion outer membrane</keyword>
<keyword id="KW-0597">Phosphoprotein</keyword>
<keyword id="KW-1185">Reference proteome</keyword>
<keyword id="KW-0812">Transmembrane</keyword>
<keyword id="KW-1133">Transmembrane helix</keyword>
<comment type="function">
    <text evidence="1 3">Regulator of mitochondrial fusion (PubMed:26711011). Acts by forming homo- and heterodimers at the mitochondrial outer membrane and facilitating the formation of PLD6/MitoPLD dimers. May act by regulating phospholipid metabolism via PLD6/MitoPLD (By similarity).</text>
</comment>
<comment type="subunit">
    <text evidence="1">Homodimer and heterodimer; forms heterodimers with MIGA2. Interacts with PLD6/MitoPLD.</text>
</comment>
<comment type="subcellular location">
    <subcellularLocation>
        <location evidence="1">Mitochondrion outer membrane</location>
        <topology evidence="2">Multi-pass membrane protein</topology>
    </subcellularLocation>
</comment>
<comment type="alternative products">
    <event type="alternative splicing"/>
    <isoform>
        <id>Q4QQM5-1</id>
        <name>1</name>
        <sequence type="displayed"/>
    </isoform>
    <isoform>
        <id>Q4QQM5-2</id>
        <name>2</name>
        <sequence type="described" ref="VSP_024881 VSP_024882"/>
    </isoform>
    <isoform>
        <id>Q4QQM5-3</id>
        <name>3</name>
        <sequence type="described" ref="VSP_024880"/>
    </isoform>
</comment>
<comment type="disruption phenotype">
    <text evidence="3 4">Mitochondrial fragmentation: mitochondria become round and show loss of cristae (PubMed:26711011). Female mice show decreased quality of oocytes (PubMed:26716412). Mice lacking both Miga1 and Miga2 show strongly reduced quality of oocytes and are subfertile (PubMed:26716412).</text>
</comment>
<comment type="similarity">
    <text evidence="6">Belongs to the mitoguardin family.</text>
</comment>
<comment type="sequence caution" evidence="6">
    <conflict type="frameshift">
        <sequence resource="EMBL-CDS" id="BAC32059"/>
    </conflict>
</comment>
<accession>Q4QQM5</accession>
<accession>Q8BR91</accession>
<accession>Q8C3S6</accession>
<accession>Q8C8P4</accession>